<keyword id="KW-0067">ATP-binding</keyword>
<keyword id="KW-0963">Cytoplasm</keyword>
<keyword id="KW-0418">Kinase</keyword>
<keyword id="KW-0547">Nucleotide-binding</keyword>
<keyword id="KW-1185">Reference proteome</keyword>
<keyword id="KW-0808">Transferase</keyword>
<comment type="catalytic activity">
    <reaction evidence="1">
        <text>CMP + ATP = CDP + ADP</text>
        <dbReference type="Rhea" id="RHEA:11600"/>
        <dbReference type="ChEBI" id="CHEBI:30616"/>
        <dbReference type="ChEBI" id="CHEBI:58069"/>
        <dbReference type="ChEBI" id="CHEBI:60377"/>
        <dbReference type="ChEBI" id="CHEBI:456216"/>
        <dbReference type="EC" id="2.7.4.25"/>
    </reaction>
</comment>
<comment type="catalytic activity">
    <reaction evidence="1">
        <text>dCMP + ATP = dCDP + ADP</text>
        <dbReference type="Rhea" id="RHEA:25094"/>
        <dbReference type="ChEBI" id="CHEBI:30616"/>
        <dbReference type="ChEBI" id="CHEBI:57566"/>
        <dbReference type="ChEBI" id="CHEBI:58593"/>
        <dbReference type="ChEBI" id="CHEBI:456216"/>
        <dbReference type="EC" id="2.7.4.25"/>
    </reaction>
</comment>
<comment type="subcellular location">
    <subcellularLocation>
        <location evidence="1">Cytoplasm</location>
    </subcellularLocation>
</comment>
<comment type="similarity">
    <text evidence="1">Belongs to the cytidylate kinase family. Type 1 subfamily.</text>
</comment>
<proteinExistence type="inferred from homology"/>
<dbReference type="EC" id="2.7.4.25" evidence="1"/>
<dbReference type="EMBL" id="CP000115">
    <property type="protein sequence ID" value="ABA03476.1"/>
    <property type="molecule type" value="Genomic_DNA"/>
</dbReference>
<dbReference type="RefSeq" id="WP_011313544.1">
    <property type="nucleotide sequence ID" value="NC_007406.1"/>
</dbReference>
<dbReference type="SMR" id="Q3SW65"/>
<dbReference type="STRING" id="323098.Nwi_0208"/>
<dbReference type="KEGG" id="nwi:Nwi_0208"/>
<dbReference type="eggNOG" id="COG0283">
    <property type="taxonomic scope" value="Bacteria"/>
</dbReference>
<dbReference type="HOGENOM" id="CLU_079959_0_1_5"/>
<dbReference type="OrthoDB" id="9807434at2"/>
<dbReference type="Proteomes" id="UP000002531">
    <property type="component" value="Chromosome"/>
</dbReference>
<dbReference type="GO" id="GO:0005737">
    <property type="term" value="C:cytoplasm"/>
    <property type="evidence" value="ECO:0007669"/>
    <property type="project" value="UniProtKB-SubCell"/>
</dbReference>
<dbReference type="GO" id="GO:0005524">
    <property type="term" value="F:ATP binding"/>
    <property type="evidence" value="ECO:0007669"/>
    <property type="project" value="UniProtKB-UniRule"/>
</dbReference>
<dbReference type="GO" id="GO:0036430">
    <property type="term" value="F:CMP kinase activity"/>
    <property type="evidence" value="ECO:0007669"/>
    <property type="project" value="RHEA"/>
</dbReference>
<dbReference type="GO" id="GO:0036431">
    <property type="term" value="F:dCMP kinase activity"/>
    <property type="evidence" value="ECO:0007669"/>
    <property type="project" value="RHEA"/>
</dbReference>
<dbReference type="GO" id="GO:0006220">
    <property type="term" value="P:pyrimidine nucleotide metabolic process"/>
    <property type="evidence" value="ECO:0007669"/>
    <property type="project" value="UniProtKB-UniRule"/>
</dbReference>
<dbReference type="CDD" id="cd02020">
    <property type="entry name" value="CMPK"/>
    <property type="match status" value="1"/>
</dbReference>
<dbReference type="Gene3D" id="3.40.50.300">
    <property type="entry name" value="P-loop containing nucleotide triphosphate hydrolases"/>
    <property type="match status" value="1"/>
</dbReference>
<dbReference type="HAMAP" id="MF_00238">
    <property type="entry name" value="Cytidyl_kinase_type1"/>
    <property type="match status" value="1"/>
</dbReference>
<dbReference type="InterPro" id="IPR003136">
    <property type="entry name" value="Cytidylate_kin"/>
</dbReference>
<dbReference type="InterPro" id="IPR011994">
    <property type="entry name" value="Cytidylate_kinase_dom"/>
</dbReference>
<dbReference type="InterPro" id="IPR027417">
    <property type="entry name" value="P-loop_NTPase"/>
</dbReference>
<dbReference type="NCBIfam" id="TIGR00017">
    <property type="entry name" value="cmk"/>
    <property type="match status" value="1"/>
</dbReference>
<dbReference type="Pfam" id="PF02224">
    <property type="entry name" value="Cytidylate_kin"/>
    <property type="match status" value="1"/>
</dbReference>
<dbReference type="SUPFAM" id="SSF52540">
    <property type="entry name" value="P-loop containing nucleoside triphosphate hydrolases"/>
    <property type="match status" value="1"/>
</dbReference>
<reference key="1">
    <citation type="journal article" date="2006" name="Appl. Environ. Microbiol.">
        <title>Genome sequence of the chemolithoautotrophic nitrite-oxidizing bacterium Nitrobacter winogradskyi Nb-255.</title>
        <authorList>
            <person name="Starkenburg S.R."/>
            <person name="Chain P.S.G."/>
            <person name="Sayavedra-Soto L.A."/>
            <person name="Hauser L."/>
            <person name="Land M.L."/>
            <person name="Larimer F.W."/>
            <person name="Malfatti S.A."/>
            <person name="Klotz M.G."/>
            <person name="Bottomley P.J."/>
            <person name="Arp D.J."/>
            <person name="Hickey W.J."/>
        </authorList>
    </citation>
    <scope>NUCLEOTIDE SEQUENCE [LARGE SCALE GENOMIC DNA]</scope>
    <source>
        <strain>ATCC 25391 / DSM 10237 / CIP 104748 / NCIMB 11846 / Nb-255</strain>
    </source>
</reference>
<organism>
    <name type="scientific">Nitrobacter winogradskyi (strain ATCC 25391 / DSM 10237 / CIP 104748 / NCIMB 11846 / Nb-255)</name>
    <dbReference type="NCBI Taxonomy" id="323098"/>
    <lineage>
        <taxon>Bacteria</taxon>
        <taxon>Pseudomonadati</taxon>
        <taxon>Pseudomonadota</taxon>
        <taxon>Alphaproteobacteria</taxon>
        <taxon>Hyphomicrobiales</taxon>
        <taxon>Nitrobacteraceae</taxon>
        <taxon>Nitrobacter</taxon>
    </lineage>
</organism>
<name>KCY_NITWN</name>
<feature type="chain" id="PRO_1000048245" description="Cytidylate kinase">
    <location>
        <begin position="1"/>
        <end position="212"/>
    </location>
</feature>
<feature type="binding site" evidence="1">
    <location>
        <begin position="7"/>
        <end position="15"/>
    </location>
    <ligand>
        <name>ATP</name>
        <dbReference type="ChEBI" id="CHEBI:30616"/>
    </ligand>
</feature>
<evidence type="ECO:0000255" key="1">
    <source>
        <dbReference type="HAMAP-Rule" id="MF_00238"/>
    </source>
</evidence>
<sequence length="212" mass="22587">MIIAIDGPAASGKGTLGKRLAAHYHFRHLDTGVIYRAVAKALLDAGADPADEARAIAAALELDPERFGHPALKARAIGEAASVVSTFPKVREALLTFQRQFAAEPPGAVLDGRDIGTVICPNADVKIFVEADPVVRARRRTLEARARGEEVDEAVVLADILKRDERDRNRPVAPLKAAADAHVLDNSNLDIEAGLKAAIAIVESVRVRSGRA</sequence>
<gene>
    <name evidence="1" type="primary">cmk</name>
    <name type="ordered locus">Nwi_0208</name>
</gene>
<accession>Q3SW65</accession>
<protein>
    <recommendedName>
        <fullName evidence="1">Cytidylate kinase</fullName>
        <shortName evidence="1">CK</shortName>
        <ecNumber evidence="1">2.7.4.25</ecNumber>
    </recommendedName>
    <alternativeName>
        <fullName evidence="1">Cytidine monophosphate kinase</fullName>
        <shortName evidence="1">CMP kinase</shortName>
    </alternativeName>
</protein>